<dbReference type="EC" id="6.3.5.-" evidence="1"/>
<dbReference type="EMBL" id="AM884176">
    <property type="protein sequence ID" value="CAP03698.1"/>
    <property type="molecule type" value="Genomic_DNA"/>
</dbReference>
<dbReference type="RefSeq" id="WP_009872305.1">
    <property type="nucleotide sequence ID" value="NC_010287.1"/>
</dbReference>
<dbReference type="RefSeq" id="YP_001654343.1">
    <property type="nucleotide sequence ID" value="NC_010287.1"/>
</dbReference>
<dbReference type="SMR" id="B0B9B1"/>
<dbReference type="KEGG" id="ctb:CTL0259"/>
<dbReference type="PATRIC" id="fig|471472.4.peg.280"/>
<dbReference type="HOGENOM" id="CLU_019240_0_0_0"/>
<dbReference type="Proteomes" id="UP001154402">
    <property type="component" value="Chromosome"/>
</dbReference>
<dbReference type="GO" id="GO:0050566">
    <property type="term" value="F:asparaginyl-tRNA synthase (glutamine-hydrolyzing) activity"/>
    <property type="evidence" value="ECO:0007669"/>
    <property type="project" value="RHEA"/>
</dbReference>
<dbReference type="GO" id="GO:0005524">
    <property type="term" value="F:ATP binding"/>
    <property type="evidence" value="ECO:0007669"/>
    <property type="project" value="UniProtKB-KW"/>
</dbReference>
<dbReference type="GO" id="GO:0050567">
    <property type="term" value="F:glutaminyl-tRNA synthase (glutamine-hydrolyzing) activity"/>
    <property type="evidence" value="ECO:0007669"/>
    <property type="project" value="UniProtKB-UniRule"/>
</dbReference>
<dbReference type="GO" id="GO:0070681">
    <property type="term" value="P:glutaminyl-tRNAGln biosynthesis via transamidation"/>
    <property type="evidence" value="ECO:0007669"/>
    <property type="project" value="TreeGrafter"/>
</dbReference>
<dbReference type="GO" id="GO:0006412">
    <property type="term" value="P:translation"/>
    <property type="evidence" value="ECO:0007669"/>
    <property type="project" value="UniProtKB-UniRule"/>
</dbReference>
<dbReference type="FunFam" id="1.10.10.410:FF:000001">
    <property type="entry name" value="Aspartyl/glutamyl-tRNA(Asn/Gln) amidotransferase subunit B"/>
    <property type="match status" value="1"/>
</dbReference>
<dbReference type="Gene3D" id="1.10.10.410">
    <property type="match status" value="1"/>
</dbReference>
<dbReference type="Gene3D" id="1.10.150.380">
    <property type="entry name" value="GatB domain, N-terminal subdomain"/>
    <property type="match status" value="1"/>
</dbReference>
<dbReference type="HAMAP" id="MF_00121">
    <property type="entry name" value="GatB"/>
    <property type="match status" value="1"/>
</dbReference>
<dbReference type="InterPro" id="IPR017959">
    <property type="entry name" value="Asn/Gln-tRNA_amidoTrfase_suB/E"/>
</dbReference>
<dbReference type="InterPro" id="IPR006075">
    <property type="entry name" value="Asn/Gln-tRNA_Trfase_suB/E_cat"/>
</dbReference>
<dbReference type="InterPro" id="IPR018027">
    <property type="entry name" value="Asn/Gln_amidotransferase"/>
</dbReference>
<dbReference type="InterPro" id="IPR003789">
    <property type="entry name" value="Asn/Gln_tRNA_amidoTrase-B-like"/>
</dbReference>
<dbReference type="InterPro" id="IPR004413">
    <property type="entry name" value="GatB"/>
</dbReference>
<dbReference type="InterPro" id="IPR042114">
    <property type="entry name" value="GatB_C_1"/>
</dbReference>
<dbReference type="InterPro" id="IPR023168">
    <property type="entry name" value="GatB_Yqey_C_2"/>
</dbReference>
<dbReference type="InterPro" id="IPR017958">
    <property type="entry name" value="Gln-tRNA_amidoTrfase_suB_CS"/>
</dbReference>
<dbReference type="InterPro" id="IPR014746">
    <property type="entry name" value="Gln_synth/guanido_kin_cat_dom"/>
</dbReference>
<dbReference type="NCBIfam" id="TIGR00133">
    <property type="entry name" value="gatB"/>
    <property type="match status" value="1"/>
</dbReference>
<dbReference type="NCBIfam" id="NF004012">
    <property type="entry name" value="PRK05477.1-2"/>
    <property type="match status" value="1"/>
</dbReference>
<dbReference type="NCBIfam" id="NF004014">
    <property type="entry name" value="PRK05477.1-4"/>
    <property type="match status" value="1"/>
</dbReference>
<dbReference type="PANTHER" id="PTHR11659">
    <property type="entry name" value="GLUTAMYL-TRNA GLN AMIDOTRANSFERASE SUBUNIT B MITOCHONDRIAL AND PROKARYOTIC PET112-RELATED"/>
    <property type="match status" value="1"/>
</dbReference>
<dbReference type="PANTHER" id="PTHR11659:SF0">
    <property type="entry name" value="GLUTAMYL-TRNA(GLN) AMIDOTRANSFERASE SUBUNIT B, MITOCHONDRIAL"/>
    <property type="match status" value="1"/>
</dbReference>
<dbReference type="Pfam" id="PF02934">
    <property type="entry name" value="GatB_N"/>
    <property type="match status" value="1"/>
</dbReference>
<dbReference type="Pfam" id="PF02637">
    <property type="entry name" value="GatB_Yqey"/>
    <property type="match status" value="1"/>
</dbReference>
<dbReference type="SMART" id="SM00845">
    <property type="entry name" value="GatB_Yqey"/>
    <property type="match status" value="1"/>
</dbReference>
<dbReference type="SUPFAM" id="SSF89095">
    <property type="entry name" value="GatB/YqeY motif"/>
    <property type="match status" value="1"/>
</dbReference>
<dbReference type="SUPFAM" id="SSF55931">
    <property type="entry name" value="Glutamine synthetase/guanido kinase"/>
    <property type="match status" value="1"/>
</dbReference>
<dbReference type="PROSITE" id="PS01234">
    <property type="entry name" value="GATB"/>
    <property type="match status" value="1"/>
</dbReference>
<keyword id="KW-0067">ATP-binding</keyword>
<keyword id="KW-0436">Ligase</keyword>
<keyword id="KW-0547">Nucleotide-binding</keyword>
<keyword id="KW-0648">Protein biosynthesis</keyword>
<organism>
    <name type="scientific">Chlamydia trachomatis serovar L2 (strain ATCC VR-902B / DSM 19102 / 434/Bu)</name>
    <dbReference type="NCBI Taxonomy" id="471472"/>
    <lineage>
        <taxon>Bacteria</taxon>
        <taxon>Pseudomonadati</taxon>
        <taxon>Chlamydiota</taxon>
        <taxon>Chlamydiia</taxon>
        <taxon>Chlamydiales</taxon>
        <taxon>Chlamydiaceae</taxon>
        <taxon>Chlamydia/Chlamydophila group</taxon>
        <taxon>Chlamydia</taxon>
    </lineage>
</organism>
<protein>
    <recommendedName>
        <fullName evidence="1">Aspartyl/glutamyl-tRNA(Asn/Gln) amidotransferase subunit B</fullName>
        <shortName evidence="1">Asp/Glu-ADT subunit B</shortName>
        <ecNumber evidence="1">6.3.5.-</ecNumber>
    </recommendedName>
</protein>
<accession>B0B9B1</accession>
<feature type="chain" id="PRO_1000095199" description="Aspartyl/glutamyl-tRNA(Asn/Gln) amidotransferase subunit B">
    <location>
        <begin position="1"/>
        <end position="488"/>
    </location>
</feature>
<comment type="function">
    <text evidence="1">Allows the formation of correctly charged Asn-tRNA(Asn) or Gln-tRNA(Gln) through the transamidation of misacylated Asp-tRNA(Asn) or Glu-tRNA(Gln) in organisms which lack either or both of asparaginyl-tRNA or glutaminyl-tRNA synthetases. The reaction takes place in the presence of glutamine and ATP through an activated phospho-Asp-tRNA(Asn) or phospho-Glu-tRNA(Gln).</text>
</comment>
<comment type="catalytic activity">
    <reaction evidence="1">
        <text>L-glutamyl-tRNA(Gln) + L-glutamine + ATP + H2O = L-glutaminyl-tRNA(Gln) + L-glutamate + ADP + phosphate + H(+)</text>
        <dbReference type="Rhea" id="RHEA:17521"/>
        <dbReference type="Rhea" id="RHEA-COMP:9681"/>
        <dbReference type="Rhea" id="RHEA-COMP:9684"/>
        <dbReference type="ChEBI" id="CHEBI:15377"/>
        <dbReference type="ChEBI" id="CHEBI:15378"/>
        <dbReference type="ChEBI" id="CHEBI:29985"/>
        <dbReference type="ChEBI" id="CHEBI:30616"/>
        <dbReference type="ChEBI" id="CHEBI:43474"/>
        <dbReference type="ChEBI" id="CHEBI:58359"/>
        <dbReference type="ChEBI" id="CHEBI:78520"/>
        <dbReference type="ChEBI" id="CHEBI:78521"/>
        <dbReference type="ChEBI" id="CHEBI:456216"/>
    </reaction>
</comment>
<comment type="catalytic activity">
    <reaction evidence="1">
        <text>L-aspartyl-tRNA(Asn) + L-glutamine + ATP + H2O = L-asparaginyl-tRNA(Asn) + L-glutamate + ADP + phosphate + 2 H(+)</text>
        <dbReference type="Rhea" id="RHEA:14513"/>
        <dbReference type="Rhea" id="RHEA-COMP:9674"/>
        <dbReference type="Rhea" id="RHEA-COMP:9677"/>
        <dbReference type="ChEBI" id="CHEBI:15377"/>
        <dbReference type="ChEBI" id="CHEBI:15378"/>
        <dbReference type="ChEBI" id="CHEBI:29985"/>
        <dbReference type="ChEBI" id="CHEBI:30616"/>
        <dbReference type="ChEBI" id="CHEBI:43474"/>
        <dbReference type="ChEBI" id="CHEBI:58359"/>
        <dbReference type="ChEBI" id="CHEBI:78515"/>
        <dbReference type="ChEBI" id="CHEBI:78516"/>
        <dbReference type="ChEBI" id="CHEBI:456216"/>
    </reaction>
</comment>
<comment type="subunit">
    <text evidence="1">Heterotrimer of A, B and C subunits.</text>
</comment>
<comment type="similarity">
    <text evidence="1">Belongs to the GatB/GatE family. GatB subfamily.</text>
</comment>
<reference key="1">
    <citation type="journal article" date="2008" name="Genome Res.">
        <title>Chlamydia trachomatis: genome sequence analysis of lymphogranuloma venereum isolates.</title>
        <authorList>
            <person name="Thomson N.R."/>
            <person name="Holden M.T.G."/>
            <person name="Carder C."/>
            <person name="Lennard N."/>
            <person name="Lockey S.J."/>
            <person name="Marsh P."/>
            <person name="Skipp P."/>
            <person name="O'Connor C.D."/>
            <person name="Goodhead I."/>
            <person name="Norbertzcak H."/>
            <person name="Harris B."/>
            <person name="Ormond D."/>
            <person name="Rance R."/>
            <person name="Quail M.A."/>
            <person name="Parkhill J."/>
            <person name="Stephens R.S."/>
            <person name="Clarke I.N."/>
        </authorList>
    </citation>
    <scope>NUCLEOTIDE SEQUENCE [LARGE SCALE GENOMIC DNA]</scope>
    <source>
        <strain>ATCC VR-902B / DSM 19102 / 434/Bu</strain>
    </source>
</reference>
<evidence type="ECO:0000255" key="1">
    <source>
        <dbReference type="HAMAP-Rule" id="MF_00121"/>
    </source>
</evidence>
<proteinExistence type="inferred from homology"/>
<gene>
    <name evidence="1" type="primary">gatB</name>
    <name type="ordered locus">CTL0259</name>
</gene>
<name>GATB_CHLT2</name>
<sequence length="488" mass="54964">MGIAHTEWESVIGLEVHVELNTESKLFSPARNHFGDEPNTNISPVCTGMPGSLPVLNKDAVRKAVLFGCAVEGDVALFSRFDRKSYFYPDSPRNFQITQYEHPIVRGGCIRAVVEGEEKTFELAQTHLEDDAGMLKHFGDFAGVDYNRAGVPLIEIVSKPCMFSAEDAVAYANALVSILGYIGISDCNMEEGSIRFDVNISVRPRGSRELRNKVEIKNMNSFTFMAQALEAEKRRQIEEYLSHPNEDPKKVVPAATYRWDPEKKKTVLMRLKERAEDYMYFVEPDLPVLQITETYIDEVRQTLPELPHSKYMRYITDFDIAEDLAMILVGDRHTAHFFETATMSCKNYRALSNWITVEFAGRCKAKGKTLPFTGILPEWVAQLVNFIDRGVITGKIAKEIADRMVSSFGESPEDILRRHPSLLPMTDDHALRAIVKEVVAQNTASVADYKNGKAKALGFLVGQIMKRTEGKAPPKRVNELLLAAMRDM</sequence>